<feature type="propeptide" id="PRO_0000431114" evidence="2">
    <location>
        <begin position="1"/>
        <end position="14"/>
    </location>
</feature>
<feature type="chain" id="PRO_0000361325" description="Photosystem II CP43 reaction center protein" evidence="2">
    <location>
        <begin position="15"/>
        <end position="473"/>
    </location>
</feature>
<feature type="transmembrane region" description="Helical" evidence="2">
    <location>
        <begin position="69"/>
        <end position="93"/>
    </location>
</feature>
<feature type="transmembrane region" description="Helical" evidence="2">
    <location>
        <begin position="134"/>
        <end position="155"/>
    </location>
</feature>
<feature type="transmembrane region" description="Helical" evidence="2">
    <location>
        <begin position="178"/>
        <end position="200"/>
    </location>
</feature>
<feature type="transmembrane region" description="Helical" evidence="2">
    <location>
        <begin position="255"/>
        <end position="275"/>
    </location>
</feature>
<feature type="transmembrane region" description="Helical" evidence="2">
    <location>
        <begin position="291"/>
        <end position="312"/>
    </location>
</feature>
<feature type="transmembrane region" description="Helical" evidence="2">
    <location>
        <begin position="447"/>
        <end position="471"/>
    </location>
</feature>
<feature type="binding site" evidence="2">
    <location>
        <position position="367"/>
    </location>
    <ligand>
        <name>[CaMn4O5] cluster</name>
        <dbReference type="ChEBI" id="CHEBI:189552"/>
    </ligand>
</feature>
<feature type="modified residue" description="N-acetylthreonine" evidence="1 2">
    <location>
        <position position="15"/>
    </location>
</feature>
<feature type="modified residue" description="Phosphothreonine" evidence="1 2">
    <location>
        <position position="15"/>
    </location>
</feature>
<geneLocation type="chloroplast"/>
<protein>
    <recommendedName>
        <fullName evidence="2">Photosystem II CP43 reaction center protein</fullName>
    </recommendedName>
    <alternativeName>
        <fullName evidence="2">PSII 43 kDa protein</fullName>
    </alternativeName>
    <alternativeName>
        <fullName evidence="2">Protein CP-43</fullName>
    </alternativeName>
</protein>
<sequence>MKTLYSLRRFYHVETLFNGTLALAGRDQETTGFAWWAGNARLINLSGKLLGAHVAHAGLIVFWAGAMNLFEVAHFVPEKPMYEQGLILLPHLATLGWGVGPGGEVIDTFPYFVSGVLHLISSAVLGFGGIYHALLGPETLEESFPFFGYVWKDRNKMTTILGIHLILLGVGAFLLVFKALYFGGVYDTWAPGGGDVRKITNLTLSPSVIFGYLLKSPFGGEGWIVSVDDLEDIIGGHVWLGSICIFGGIWHILTKPFAWARRALVWSGEAYLSYSLAALSVCGFIACCFVWFNNTAYPSEFYGPTGPEASQAQAFTFLVRDQRLGANVGSAQGPTGLGKYLMRSPTGEVIFGGETMRFWDLRAPWLEPLRGPNGLDLSRLKKDIQPWQERRSAEYMTHAPLGSLNSVGGVATEINAVNYVSPRSWLSTSHFVLGFFLFVGHLWHAGRARAAAAGFEKGIDRDFEPVLSMTPLN</sequence>
<evidence type="ECO:0000250" key="1">
    <source>
        <dbReference type="UniProtKB" id="P56778"/>
    </source>
</evidence>
<evidence type="ECO:0000255" key="2">
    <source>
        <dbReference type="HAMAP-Rule" id="MF_01496"/>
    </source>
</evidence>
<comment type="function">
    <text evidence="2">One of the components of the core complex of photosystem II (PSII). It binds chlorophyll and helps catalyze the primary light-induced photochemical processes of PSII. PSII is a light-driven water:plastoquinone oxidoreductase, using light energy to abstract electrons from H(2)O, generating O(2) and a proton gradient subsequently used for ATP formation.</text>
</comment>
<comment type="cofactor">
    <text evidence="2">Binds multiple chlorophylls and provides some of the ligands for the Ca-4Mn-5O cluster of the oxygen-evolving complex. It may also provide a ligand for a Cl- that is required for oxygen evolution. PSII binds additional chlorophylls, carotenoids and specific lipids.</text>
</comment>
<comment type="subunit">
    <text evidence="2">PSII is composed of 1 copy each of membrane proteins PsbA, PsbB, PsbC, PsbD, PsbE, PsbF, PsbH, PsbI, PsbJ, PsbK, PsbL, PsbM, PsbT, PsbX, PsbY, PsbZ, Psb30/Ycf12, at least 3 peripheral proteins of the oxygen-evolving complex and a large number of cofactors. It forms dimeric complexes.</text>
</comment>
<comment type="subcellular location">
    <subcellularLocation>
        <location evidence="2">Plastid</location>
        <location evidence="2">Chloroplast thylakoid membrane</location>
        <topology evidence="2">Multi-pass membrane protein</topology>
    </subcellularLocation>
</comment>
<comment type="similarity">
    <text evidence="2">Belongs to the PsbB/PsbC family. PsbC subfamily.</text>
</comment>
<accession>A4QKA1</accession>
<proteinExistence type="inferred from homology"/>
<gene>
    <name evidence="2" type="primary">psbC</name>
</gene>
<keyword id="KW-0007">Acetylation</keyword>
<keyword id="KW-0148">Chlorophyll</keyword>
<keyword id="KW-0150">Chloroplast</keyword>
<keyword id="KW-0157">Chromophore</keyword>
<keyword id="KW-0464">Manganese</keyword>
<keyword id="KW-0472">Membrane</keyword>
<keyword id="KW-0479">Metal-binding</keyword>
<keyword id="KW-0597">Phosphoprotein</keyword>
<keyword id="KW-0602">Photosynthesis</keyword>
<keyword id="KW-0604">Photosystem II</keyword>
<keyword id="KW-0934">Plastid</keyword>
<keyword id="KW-0793">Thylakoid</keyword>
<keyword id="KW-0812">Transmembrane</keyword>
<keyword id="KW-1133">Transmembrane helix</keyword>
<organism>
    <name type="scientific">Barbarea verna</name>
    <name type="common">Land cress</name>
    <name type="synonym">Erysimum vernum</name>
    <dbReference type="NCBI Taxonomy" id="50458"/>
    <lineage>
        <taxon>Eukaryota</taxon>
        <taxon>Viridiplantae</taxon>
        <taxon>Streptophyta</taxon>
        <taxon>Embryophyta</taxon>
        <taxon>Tracheophyta</taxon>
        <taxon>Spermatophyta</taxon>
        <taxon>Magnoliopsida</taxon>
        <taxon>eudicotyledons</taxon>
        <taxon>Gunneridae</taxon>
        <taxon>Pentapetalae</taxon>
        <taxon>rosids</taxon>
        <taxon>malvids</taxon>
        <taxon>Brassicales</taxon>
        <taxon>Brassicaceae</taxon>
        <taxon>Cardamineae</taxon>
        <taxon>Barbarea</taxon>
    </lineage>
</organism>
<reference key="1">
    <citation type="submission" date="2007-03" db="EMBL/GenBank/DDBJ databases">
        <title>Sequencing analysis of Barbarea verna chloroplast DNA.</title>
        <authorList>
            <person name="Hosouchi T."/>
            <person name="Tsuruoka H."/>
            <person name="Kotani H."/>
        </authorList>
    </citation>
    <scope>NUCLEOTIDE SEQUENCE [LARGE SCALE GENOMIC DNA]</scope>
</reference>
<dbReference type="EMBL" id="AP009370">
    <property type="protein sequence ID" value="BAF50106.1"/>
    <property type="molecule type" value="Genomic_DNA"/>
</dbReference>
<dbReference type="RefSeq" id="YP_001123282.1">
    <property type="nucleotide sequence ID" value="NC_009269.1"/>
</dbReference>
<dbReference type="SMR" id="A4QKA1"/>
<dbReference type="GeneID" id="4961859"/>
<dbReference type="GO" id="GO:0009535">
    <property type="term" value="C:chloroplast thylakoid membrane"/>
    <property type="evidence" value="ECO:0007669"/>
    <property type="project" value="UniProtKB-SubCell"/>
</dbReference>
<dbReference type="GO" id="GO:0009523">
    <property type="term" value="C:photosystem II"/>
    <property type="evidence" value="ECO:0007669"/>
    <property type="project" value="UniProtKB-KW"/>
</dbReference>
<dbReference type="GO" id="GO:0016168">
    <property type="term" value="F:chlorophyll binding"/>
    <property type="evidence" value="ECO:0007669"/>
    <property type="project" value="UniProtKB-UniRule"/>
</dbReference>
<dbReference type="GO" id="GO:0045156">
    <property type="term" value="F:electron transporter, transferring electrons within the cyclic electron transport pathway of photosynthesis activity"/>
    <property type="evidence" value="ECO:0007669"/>
    <property type="project" value="InterPro"/>
</dbReference>
<dbReference type="GO" id="GO:0046872">
    <property type="term" value="F:metal ion binding"/>
    <property type="evidence" value="ECO:0007669"/>
    <property type="project" value="UniProtKB-KW"/>
</dbReference>
<dbReference type="GO" id="GO:0009772">
    <property type="term" value="P:photosynthetic electron transport in photosystem II"/>
    <property type="evidence" value="ECO:0007669"/>
    <property type="project" value="InterPro"/>
</dbReference>
<dbReference type="FunFam" id="1.10.10.670:FF:000001">
    <property type="entry name" value="Photosystem II CP43 reaction center protein"/>
    <property type="match status" value="1"/>
</dbReference>
<dbReference type="Gene3D" id="1.10.10.670">
    <property type="entry name" value="photosystem ii from thermosynechococcus elongatus"/>
    <property type="match status" value="1"/>
</dbReference>
<dbReference type="HAMAP" id="MF_01496">
    <property type="entry name" value="PSII_PsbC_CP43"/>
    <property type="match status" value="1"/>
</dbReference>
<dbReference type="InterPro" id="IPR000932">
    <property type="entry name" value="PS_antenna-like"/>
</dbReference>
<dbReference type="InterPro" id="IPR036001">
    <property type="entry name" value="PS_II_antenna-like_sf"/>
</dbReference>
<dbReference type="InterPro" id="IPR005869">
    <property type="entry name" value="PSII_PsbC"/>
</dbReference>
<dbReference type="InterPro" id="IPR044900">
    <property type="entry name" value="PSII_PsbC_sf"/>
</dbReference>
<dbReference type="NCBIfam" id="TIGR01153">
    <property type="entry name" value="psbC"/>
    <property type="match status" value="1"/>
</dbReference>
<dbReference type="Pfam" id="PF00421">
    <property type="entry name" value="PSII"/>
    <property type="match status" value="1"/>
</dbReference>
<dbReference type="SUPFAM" id="SSF161077">
    <property type="entry name" value="Photosystem II antenna protein-like"/>
    <property type="match status" value="1"/>
</dbReference>
<name>PSBC_BARVE</name>